<organism evidence="10">
    <name type="scientific">Xenopus laevis</name>
    <name type="common">African clawed frog</name>
    <dbReference type="NCBI Taxonomy" id="8355"/>
    <lineage>
        <taxon>Eukaryota</taxon>
        <taxon>Metazoa</taxon>
        <taxon>Chordata</taxon>
        <taxon>Craniata</taxon>
        <taxon>Vertebrata</taxon>
        <taxon>Euteleostomi</taxon>
        <taxon>Amphibia</taxon>
        <taxon>Batrachia</taxon>
        <taxon>Anura</taxon>
        <taxon>Pipoidea</taxon>
        <taxon>Pipidae</taxon>
        <taxon>Xenopodinae</taxon>
        <taxon>Xenopus</taxon>
        <taxon>Xenopus</taxon>
    </lineage>
</organism>
<accession>Q90Y90</accession>
<protein>
    <recommendedName>
        <fullName>Kremen protein 1</fullName>
    </recommendedName>
    <alternativeName>
        <fullName>Dickkopf receptor</fullName>
    </alternativeName>
    <alternativeName>
        <fullName>Kringle-containing protein marking the eye and the nose</fullName>
    </alternativeName>
</protein>
<feature type="signal peptide" evidence="3">
    <location>
        <begin position="1"/>
        <end position="22"/>
    </location>
</feature>
<feature type="chain" id="PRO_0000021567" description="Kremen protein 1">
    <location>
        <begin position="23"/>
        <end position="452"/>
    </location>
</feature>
<feature type="topological domain" description="Extracellular" evidence="3">
    <location>
        <begin position="23"/>
        <end position="369"/>
    </location>
</feature>
<feature type="transmembrane region" description="Helical" evidence="3">
    <location>
        <begin position="370"/>
        <end position="390"/>
    </location>
</feature>
<feature type="topological domain" description="Cytoplasmic" evidence="3">
    <location>
        <begin position="391"/>
        <end position="452"/>
    </location>
</feature>
<feature type="domain" description="Kringle" evidence="5">
    <location>
        <begin position="29"/>
        <end position="112"/>
    </location>
</feature>
<feature type="domain" description="WSC" evidence="6">
    <location>
        <begin position="114"/>
        <end position="208"/>
    </location>
</feature>
<feature type="domain" description="CUB" evidence="4 9">
    <location>
        <begin position="212"/>
        <end position="319"/>
    </location>
</feature>
<feature type="glycosylation site" description="N-linked (GlcNAc...) asparagine" evidence="3">
    <location>
        <position position="43"/>
    </location>
</feature>
<feature type="glycosylation site" description="N-linked (GlcNAc...) asparagine" evidence="3">
    <location>
        <position position="57"/>
    </location>
</feature>
<feature type="glycosylation site" description="N-linked (GlcNAc...) asparagine" evidence="3">
    <location>
        <position position="215"/>
    </location>
</feature>
<feature type="glycosylation site" description="N-linked (GlcNAc...) asparagine" evidence="3">
    <location>
        <position position="253"/>
    </location>
</feature>
<feature type="glycosylation site" description="N-linked (GlcNAc...) asparagine" evidence="3">
    <location>
        <position position="291"/>
    </location>
</feature>
<feature type="glycosylation site" description="N-linked (GlcNAc...) asparagine" evidence="3">
    <location>
        <position position="328"/>
    </location>
</feature>
<feature type="glycosylation site" description="N-linked (GlcNAc...) asparagine" evidence="3">
    <location>
        <position position="344"/>
    </location>
</feature>
<feature type="disulfide bond" evidence="1">
    <location>
        <begin position="30"/>
        <end position="112"/>
    </location>
</feature>
<feature type="disulfide bond" evidence="1">
    <location>
        <begin position="53"/>
        <end position="93"/>
    </location>
</feature>
<feature type="disulfide bond" evidence="1">
    <location>
        <begin position="82"/>
        <end position="107"/>
    </location>
</feature>
<feature type="disulfide bond" evidence="1">
    <location>
        <begin position="120"/>
        <end position="184"/>
    </location>
</feature>
<feature type="disulfide bond" evidence="1">
    <location>
        <begin position="145"/>
        <end position="165"/>
    </location>
</feature>
<feature type="disulfide bond" evidence="1">
    <location>
        <begin position="149"/>
        <end position="167"/>
    </location>
</feature>
<feature type="disulfide bond" evidence="1">
    <location>
        <begin position="188"/>
        <end position="196"/>
    </location>
</feature>
<feature type="disulfide bond" evidence="1">
    <location>
        <begin position="212"/>
        <end position="238"/>
    </location>
</feature>
<dbReference type="EMBL" id="AB070851">
    <property type="protein sequence ID" value="BAB64294.1"/>
    <property type="molecule type" value="mRNA"/>
</dbReference>
<dbReference type="RefSeq" id="NP_001082145.1">
    <property type="nucleotide sequence ID" value="NM_001088676.2"/>
</dbReference>
<dbReference type="SMR" id="Q90Y90"/>
<dbReference type="GlyCosmos" id="Q90Y90">
    <property type="glycosylation" value="7 sites, No reported glycans"/>
</dbReference>
<dbReference type="GeneID" id="398249"/>
<dbReference type="KEGG" id="xla:398249"/>
<dbReference type="AGR" id="Xenbase:XB-GENE-865130"/>
<dbReference type="CTD" id="398249"/>
<dbReference type="Xenbase" id="XB-GENE-865130">
    <property type="gene designation" value="kremen1.S"/>
</dbReference>
<dbReference type="OrthoDB" id="4781at2759"/>
<dbReference type="Proteomes" id="UP000186698">
    <property type="component" value="Chromosome 1S"/>
</dbReference>
<dbReference type="Bgee" id="398249">
    <property type="expression patterns" value="Expressed in lung and 13 other cell types or tissues"/>
</dbReference>
<dbReference type="GO" id="GO:0005886">
    <property type="term" value="C:plasma membrane"/>
    <property type="evidence" value="ECO:0000318"/>
    <property type="project" value="GO_Central"/>
</dbReference>
<dbReference type="GO" id="GO:0004888">
    <property type="term" value="F:transmembrane signaling receptor activity"/>
    <property type="evidence" value="ECO:0000318"/>
    <property type="project" value="GO_Central"/>
</dbReference>
<dbReference type="GO" id="GO:0007165">
    <property type="term" value="P:signal transduction"/>
    <property type="evidence" value="ECO:0000318"/>
    <property type="project" value="GO_Central"/>
</dbReference>
<dbReference type="GO" id="GO:0016055">
    <property type="term" value="P:Wnt signaling pathway"/>
    <property type="evidence" value="ECO:0007669"/>
    <property type="project" value="UniProtKB-KW"/>
</dbReference>
<dbReference type="CDD" id="cd00041">
    <property type="entry name" value="CUB"/>
    <property type="match status" value="1"/>
</dbReference>
<dbReference type="CDD" id="cd00108">
    <property type="entry name" value="KR"/>
    <property type="match status" value="1"/>
</dbReference>
<dbReference type="FunFam" id="2.40.20.10:FF:000006">
    <property type="entry name" value="Kremen protein 2"/>
    <property type="match status" value="1"/>
</dbReference>
<dbReference type="Gene3D" id="2.40.20.10">
    <property type="entry name" value="Plasminogen Kringle 4"/>
    <property type="match status" value="1"/>
</dbReference>
<dbReference type="Gene3D" id="2.60.120.290">
    <property type="entry name" value="Spermadhesin, CUB domain"/>
    <property type="match status" value="1"/>
</dbReference>
<dbReference type="InterPro" id="IPR000859">
    <property type="entry name" value="CUB_dom"/>
</dbReference>
<dbReference type="InterPro" id="IPR017076">
    <property type="entry name" value="Kremen"/>
</dbReference>
<dbReference type="InterPro" id="IPR051836">
    <property type="entry name" value="Kremen_rcpt"/>
</dbReference>
<dbReference type="InterPro" id="IPR000001">
    <property type="entry name" value="Kringle"/>
</dbReference>
<dbReference type="InterPro" id="IPR013806">
    <property type="entry name" value="Kringle-like"/>
</dbReference>
<dbReference type="InterPro" id="IPR018056">
    <property type="entry name" value="Kringle_CS"/>
</dbReference>
<dbReference type="InterPro" id="IPR038178">
    <property type="entry name" value="Kringle_sf"/>
</dbReference>
<dbReference type="InterPro" id="IPR035914">
    <property type="entry name" value="Sperma_CUB_dom_sf"/>
</dbReference>
<dbReference type="InterPro" id="IPR002889">
    <property type="entry name" value="WSC_carb-bd"/>
</dbReference>
<dbReference type="PANTHER" id="PTHR24269">
    <property type="entry name" value="KREMEN PROTEIN"/>
    <property type="match status" value="1"/>
</dbReference>
<dbReference type="PANTHER" id="PTHR24269:SF13">
    <property type="entry name" value="KREMEN PROTEIN 1"/>
    <property type="match status" value="1"/>
</dbReference>
<dbReference type="Pfam" id="PF00431">
    <property type="entry name" value="CUB"/>
    <property type="match status" value="1"/>
</dbReference>
<dbReference type="Pfam" id="PF00051">
    <property type="entry name" value="Kringle"/>
    <property type="match status" value="1"/>
</dbReference>
<dbReference type="Pfam" id="PF01822">
    <property type="entry name" value="WSC"/>
    <property type="match status" value="1"/>
</dbReference>
<dbReference type="PIRSF" id="PIRSF036961">
    <property type="entry name" value="Kremen"/>
    <property type="match status" value="1"/>
</dbReference>
<dbReference type="PRINTS" id="PR00018">
    <property type="entry name" value="KRINGLE"/>
</dbReference>
<dbReference type="SMART" id="SM00042">
    <property type="entry name" value="CUB"/>
    <property type="match status" value="1"/>
</dbReference>
<dbReference type="SMART" id="SM00130">
    <property type="entry name" value="KR"/>
    <property type="match status" value="1"/>
</dbReference>
<dbReference type="SMART" id="SM00321">
    <property type="entry name" value="WSC"/>
    <property type="match status" value="1"/>
</dbReference>
<dbReference type="SUPFAM" id="SSF57440">
    <property type="entry name" value="Kringle-like"/>
    <property type="match status" value="1"/>
</dbReference>
<dbReference type="SUPFAM" id="SSF49854">
    <property type="entry name" value="Spermadhesin, CUB domain"/>
    <property type="match status" value="1"/>
</dbReference>
<dbReference type="PROSITE" id="PS01180">
    <property type="entry name" value="CUB"/>
    <property type="match status" value="1"/>
</dbReference>
<dbReference type="PROSITE" id="PS00021">
    <property type="entry name" value="KRINGLE_1"/>
    <property type="match status" value="1"/>
</dbReference>
<dbReference type="PROSITE" id="PS50070">
    <property type="entry name" value="KRINGLE_2"/>
    <property type="match status" value="1"/>
</dbReference>
<dbReference type="PROSITE" id="PS51212">
    <property type="entry name" value="WSC"/>
    <property type="match status" value="1"/>
</dbReference>
<proteinExistence type="evidence at protein level"/>
<reference evidence="9" key="1">
    <citation type="submission" date="2001-08" db="EMBL/GenBank/DDBJ databases">
        <authorList>
            <person name="Nakamura T."/>
        </authorList>
    </citation>
    <scope>NUCLEOTIDE SEQUENCE [MRNA]</scope>
</reference>
<reference key="2">
    <citation type="journal article" date="2007" name="Development">
        <title>Kremen is required for neural crest induction in Xenopus and promotes LRP6-mediated Wnt signaling.</title>
        <authorList>
            <person name="Hassler C."/>
            <person name="Cruciat C.M."/>
            <person name="Huang Y.L."/>
            <person name="Kuriyama S."/>
            <person name="Mayor R."/>
            <person name="Niehrs C."/>
        </authorList>
    </citation>
    <scope>FUNCTION</scope>
    <scope>INTERACTION WITH LRP6</scope>
</reference>
<reference key="3">
    <citation type="journal article" date="2008" name="Sci. Signal.">
        <title>Context-dependent activation or inhibition of Wnt-beta-catenin signaling by Kremen.</title>
        <authorList>
            <person name="Cselenyi C.S."/>
            <person name="Lee E."/>
        </authorList>
    </citation>
    <scope>REVIEW</scope>
    <scope>FUNCTION</scope>
</reference>
<keyword id="KW-1003">Cell membrane</keyword>
<keyword id="KW-1015">Disulfide bond</keyword>
<keyword id="KW-0325">Glycoprotein</keyword>
<keyword id="KW-0420">Kringle</keyword>
<keyword id="KW-0472">Membrane</keyword>
<keyword id="KW-1185">Reference proteome</keyword>
<keyword id="KW-0732">Signal</keyword>
<keyword id="KW-0812">Transmembrane</keyword>
<keyword id="KW-1133">Transmembrane helix</keyword>
<keyword id="KW-0879">Wnt signaling pathway</keyword>
<sequence>MVMDIWTISLRILLFPSALVLCSDSFHSECYTVNGADYRGTQNQTSLDGGKPCLFWNETFQHPYNTLKYPNGEGGLGEHNYCRNPDGDVSPWCYIPEQEDGVYWKYCDIPACKMPGNLGCFRDHGNPPPLTGISETSNKQTIQTCITMCRRQRYKLAGLEAGFACFCGNNADYRKHGEMPSTDCNSVCFGDHTQPCGGDGRIILFDSLIGACGGNYSTDSAVIYSPDFPDTYGTGKACYWTIQVTDASIIRFNFTLFDIKDSRDMVELLDGYTKQVLIRFDGRNHPTHSFNISLDFVILYFFSDRINQAQGFSVVYEAFKEETIEKPNGSNNPSQTEMITQTTNLSINAARSSKILYVITTSPSRPSGHVPGWTIYALTGLLILTIIAISAKALLHISMKSARLASSSSLDSCHRGSAGEIWSIFYKPSTSISIFPKKLKGQHDDRNPLVGE</sequence>
<name>KREM1_XENLA</name>
<comment type="function">
    <text evidence="7 8">Receptor for Dickkopf proteins. Cooperates with DKK1/2 proteins to inhibit Wnt/beta-catenin signaling by promoting the endocytosis of Wnt receptors LRP5 and LRP6. In the absence of DKK1, potentiates Wnt-beta-catenin signaling by maintaining LRP5 or LRP6 at the cell membrane (PubMed:17978005, PubMed:18314504).</text>
</comment>
<comment type="subunit">
    <text evidence="7">Interacts with lrp6.</text>
</comment>
<comment type="subcellular location">
    <subcellularLocation>
        <location evidence="2">Cell membrane</location>
        <topology evidence="9">Single-pass type I membrane protein</topology>
    </subcellularLocation>
</comment>
<evidence type="ECO:0000250" key="1">
    <source>
        <dbReference type="UniProtKB" id="Q96MU8"/>
    </source>
</evidence>
<evidence type="ECO:0000250" key="2">
    <source>
        <dbReference type="UniProtKB" id="Q99N43"/>
    </source>
</evidence>
<evidence type="ECO:0000255" key="3"/>
<evidence type="ECO:0000255" key="4">
    <source>
        <dbReference type="PROSITE-ProRule" id="PRU00059"/>
    </source>
</evidence>
<evidence type="ECO:0000255" key="5">
    <source>
        <dbReference type="PROSITE-ProRule" id="PRU00121"/>
    </source>
</evidence>
<evidence type="ECO:0000255" key="6">
    <source>
        <dbReference type="PROSITE-ProRule" id="PRU00558"/>
    </source>
</evidence>
<evidence type="ECO:0000269" key="7">
    <source>
    </source>
</evidence>
<evidence type="ECO:0000303" key="8">
    <source>
    </source>
</evidence>
<evidence type="ECO:0000305" key="9"/>
<evidence type="ECO:0000312" key="10">
    <source>
        <dbReference type="EMBL" id="BAB64294.1"/>
    </source>
</evidence>
<gene>
    <name type="primary">kremen1</name>
</gene>